<protein>
    <recommendedName>
        <fullName evidence="1">Large ribosomal subunit protein uL5</fullName>
    </recommendedName>
    <alternativeName>
        <fullName evidence="2">50S ribosomal protein L5</fullName>
    </alternativeName>
</protein>
<dbReference type="EMBL" id="CP000034">
    <property type="protein sequence ID" value="ABB63462.1"/>
    <property type="molecule type" value="Genomic_DNA"/>
</dbReference>
<dbReference type="RefSeq" id="WP_001096200.1">
    <property type="nucleotide sequence ID" value="NC_007606.1"/>
</dbReference>
<dbReference type="RefSeq" id="YP_404953.1">
    <property type="nucleotide sequence ID" value="NC_007606.1"/>
</dbReference>
<dbReference type="SMR" id="Q32B43"/>
<dbReference type="STRING" id="300267.SDY_3484"/>
<dbReference type="EnsemblBacteria" id="ABB63462">
    <property type="protein sequence ID" value="ABB63462"/>
    <property type="gene ID" value="SDY_3484"/>
</dbReference>
<dbReference type="GeneID" id="93778679"/>
<dbReference type="KEGG" id="sdy:SDY_3484"/>
<dbReference type="PATRIC" id="fig|300267.13.peg.4137"/>
<dbReference type="HOGENOM" id="CLU_061015_2_1_6"/>
<dbReference type="PRO" id="PR:Q32B43"/>
<dbReference type="Proteomes" id="UP000002716">
    <property type="component" value="Chromosome"/>
</dbReference>
<dbReference type="GO" id="GO:1990904">
    <property type="term" value="C:ribonucleoprotein complex"/>
    <property type="evidence" value="ECO:0007669"/>
    <property type="project" value="UniProtKB-KW"/>
</dbReference>
<dbReference type="GO" id="GO:0005840">
    <property type="term" value="C:ribosome"/>
    <property type="evidence" value="ECO:0007669"/>
    <property type="project" value="UniProtKB-KW"/>
</dbReference>
<dbReference type="GO" id="GO:0019843">
    <property type="term" value="F:rRNA binding"/>
    <property type="evidence" value="ECO:0007669"/>
    <property type="project" value="UniProtKB-UniRule"/>
</dbReference>
<dbReference type="GO" id="GO:0003735">
    <property type="term" value="F:structural constituent of ribosome"/>
    <property type="evidence" value="ECO:0007669"/>
    <property type="project" value="InterPro"/>
</dbReference>
<dbReference type="GO" id="GO:0000049">
    <property type="term" value="F:tRNA binding"/>
    <property type="evidence" value="ECO:0007669"/>
    <property type="project" value="UniProtKB-UniRule"/>
</dbReference>
<dbReference type="GO" id="GO:0006412">
    <property type="term" value="P:translation"/>
    <property type="evidence" value="ECO:0007669"/>
    <property type="project" value="UniProtKB-UniRule"/>
</dbReference>
<dbReference type="FunFam" id="3.30.1440.10:FF:000001">
    <property type="entry name" value="50S ribosomal protein L5"/>
    <property type="match status" value="1"/>
</dbReference>
<dbReference type="Gene3D" id="3.30.1440.10">
    <property type="match status" value="1"/>
</dbReference>
<dbReference type="HAMAP" id="MF_01333_B">
    <property type="entry name" value="Ribosomal_uL5_B"/>
    <property type="match status" value="1"/>
</dbReference>
<dbReference type="InterPro" id="IPR002132">
    <property type="entry name" value="Ribosomal_uL5"/>
</dbReference>
<dbReference type="InterPro" id="IPR020930">
    <property type="entry name" value="Ribosomal_uL5_bac-type"/>
</dbReference>
<dbReference type="InterPro" id="IPR031309">
    <property type="entry name" value="Ribosomal_uL5_C"/>
</dbReference>
<dbReference type="InterPro" id="IPR020929">
    <property type="entry name" value="Ribosomal_uL5_CS"/>
</dbReference>
<dbReference type="InterPro" id="IPR022803">
    <property type="entry name" value="Ribosomal_uL5_dom_sf"/>
</dbReference>
<dbReference type="InterPro" id="IPR031310">
    <property type="entry name" value="Ribosomal_uL5_N"/>
</dbReference>
<dbReference type="NCBIfam" id="NF000585">
    <property type="entry name" value="PRK00010.1"/>
    <property type="match status" value="1"/>
</dbReference>
<dbReference type="PANTHER" id="PTHR11994">
    <property type="entry name" value="60S RIBOSOMAL PROTEIN L11-RELATED"/>
    <property type="match status" value="1"/>
</dbReference>
<dbReference type="Pfam" id="PF00281">
    <property type="entry name" value="Ribosomal_L5"/>
    <property type="match status" value="1"/>
</dbReference>
<dbReference type="Pfam" id="PF00673">
    <property type="entry name" value="Ribosomal_L5_C"/>
    <property type="match status" value="1"/>
</dbReference>
<dbReference type="PIRSF" id="PIRSF002161">
    <property type="entry name" value="Ribosomal_L5"/>
    <property type="match status" value="1"/>
</dbReference>
<dbReference type="SUPFAM" id="SSF55282">
    <property type="entry name" value="RL5-like"/>
    <property type="match status" value="1"/>
</dbReference>
<dbReference type="PROSITE" id="PS00358">
    <property type="entry name" value="RIBOSOMAL_L5"/>
    <property type="match status" value="1"/>
</dbReference>
<comment type="function">
    <text evidence="1">This is one of the proteins that bind and probably mediate the attachment of the 5S RNA into the large ribosomal subunit, where it forms part of the central protuberance. In the 70S ribosome it contacts protein S13 of the 30S subunit (bridge B1b), connecting the 2 subunits; this bridge is implicated in subunit movement. Contacts the P site tRNA; the 5S rRNA and some of its associated proteins might help stabilize positioning of ribosome-bound tRNAs.</text>
</comment>
<comment type="subunit">
    <text evidence="1">Part of the 50S ribosomal subunit; part of the 5S rRNA/L5/L18/L25 subcomplex. Contacts the 5S rRNA and the P site tRNA. Forms a bridge to the 30S subunit in the 70S ribosome.</text>
</comment>
<comment type="similarity">
    <text evidence="1">Belongs to the universal ribosomal protein uL5 family.</text>
</comment>
<reference key="1">
    <citation type="journal article" date="2005" name="Nucleic Acids Res.">
        <title>Genome dynamics and diversity of Shigella species, the etiologic agents of bacillary dysentery.</title>
        <authorList>
            <person name="Yang F."/>
            <person name="Yang J."/>
            <person name="Zhang X."/>
            <person name="Chen L."/>
            <person name="Jiang Y."/>
            <person name="Yan Y."/>
            <person name="Tang X."/>
            <person name="Wang J."/>
            <person name="Xiong Z."/>
            <person name="Dong J."/>
            <person name="Xue Y."/>
            <person name="Zhu Y."/>
            <person name="Xu X."/>
            <person name="Sun L."/>
            <person name="Chen S."/>
            <person name="Nie H."/>
            <person name="Peng J."/>
            <person name="Xu J."/>
            <person name="Wang Y."/>
            <person name="Yuan Z."/>
            <person name="Wen Y."/>
            <person name="Yao Z."/>
            <person name="Shen Y."/>
            <person name="Qiang B."/>
            <person name="Hou Y."/>
            <person name="Yu J."/>
            <person name="Jin Q."/>
        </authorList>
    </citation>
    <scope>NUCLEOTIDE SEQUENCE [LARGE SCALE GENOMIC DNA]</scope>
    <source>
        <strain>Sd197</strain>
    </source>
</reference>
<organism>
    <name type="scientific">Shigella dysenteriae serotype 1 (strain Sd197)</name>
    <dbReference type="NCBI Taxonomy" id="300267"/>
    <lineage>
        <taxon>Bacteria</taxon>
        <taxon>Pseudomonadati</taxon>
        <taxon>Pseudomonadota</taxon>
        <taxon>Gammaproteobacteria</taxon>
        <taxon>Enterobacterales</taxon>
        <taxon>Enterobacteriaceae</taxon>
        <taxon>Shigella</taxon>
    </lineage>
</organism>
<accession>Q32B43</accession>
<name>RL5_SHIDS</name>
<keyword id="KW-0007">Acetylation</keyword>
<keyword id="KW-1185">Reference proteome</keyword>
<keyword id="KW-0687">Ribonucleoprotein</keyword>
<keyword id="KW-0689">Ribosomal protein</keyword>
<keyword id="KW-0694">RNA-binding</keyword>
<keyword id="KW-0699">rRNA-binding</keyword>
<keyword id="KW-0820">tRNA-binding</keyword>
<gene>
    <name evidence="1" type="primary">rplE</name>
    <name type="ordered locus">SDY_3484</name>
</gene>
<evidence type="ECO:0000255" key="1">
    <source>
        <dbReference type="HAMAP-Rule" id="MF_01333"/>
    </source>
</evidence>
<evidence type="ECO:0000305" key="2"/>
<proteinExistence type="inferred from homology"/>
<feature type="chain" id="PRO_0000243063" description="Large ribosomal subunit protein uL5">
    <location>
        <begin position="1"/>
        <end position="179"/>
    </location>
</feature>
<feature type="modified residue" description="N6-acetyllysine" evidence="1">
    <location>
        <position position="3"/>
    </location>
</feature>
<sequence length="179" mass="20302">MAKLHDYYKDEVVKKLMTEFNYNSVMQVPRVEKITLNMGVGEAIADKKLLDNAAADLAAISGQKPLITKARKSVAGFKIRQGYPIGCKVTLRGERMWEFFERLITIAVPRIRDFRGLSAKSFDGRGNYSMGVREQIIFPEIDYDKVDRVRGLDITITTTAKSDEEGRALLAAFDFPFRK</sequence>